<name>GLPB_ECOHS</name>
<sequence length="419" mass="45324">MRFDTVIMGGGLAGLLCGLQLQKHGLRCAIVTRGQSALHFSSGSLDLLSHLPDGQPVADIHSGLESLRQQAPAHPYSLLGPQRVLDLACQAQALIAESGAQLQGSVELAHQRITPLGTLRSTWLSSPEVPVWPLPAKKICVVGISGLMDFQAHLAAASLRELDLSVETAEIELPELDVLRNNATEFRAVNIARFLDNEENWPLLLDALIPVANTCEMILMPACFGLADDKLWRWLNEKLPCSLMLLPTLPPSVLGIRLQNQLQRQFVHQGGVWMPGDEVKKVTCKNGVVNEIWTRNHADIPLRPRFAVLASGSFFSGGLVAERNGIREPILGLDVLQTATRGEWYKGDFFAPQPWQQFGVTTDETLRPSQAGQTIENLFAIGSVLGGFDPIAQGCGGGVCAVSALHAAQQIAQRAGGQQ</sequence>
<reference key="1">
    <citation type="journal article" date="2008" name="J. Bacteriol.">
        <title>The pangenome structure of Escherichia coli: comparative genomic analysis of E. coli commensal and pathogenic isolates.</title>
        <authorList>
            <person name="Rasko D.A."/>
            <person name="Rosovitz M.J."/>
            <person name="Myers G.S.A."/>
            <person name="Mongodin E.F."/>
            <person name="Fricke W.F."/>
            <person name="Gajer P."/>
            <person name="Crabtree J."/>
            <person name="Sebaihia M."/>
            <person name="Thomson N.R."/>
            <person name="Chaudhuri R."/>
            <person name="Henderson I.R."/>
            <person name="Sperandio V."/>
            <person name="Ravel J."/>
        </authorList>
    </citation>
    <scope>NUCLEOTIDE SEQUENCE [LARGE SCALE GENOMIC DNA]</scope>
    <source>
        <strain>HS</strain>
    </source>
</reference>
<gene>
    <name evidence="1" type="primary">glpB</name>
    <name type="ordered locus">EcHS_A2383</name>
</gene>
<comment type="function">
    <text evidence="1">Conversion of glycerol 3-phosphate to dihydroxyacetone. Uses fumarate or nitrate as electron acceptor.</text>
</comment>
<comment type="catalytic activity">
    <reaction evidence="1">
        <text>a quinone + sn-glycerol 3-phosphate = dihydroxyacetone phosphate + a quinol</text>
        <dbReference type="Rhea" id="RHEA:18977"/>
        <dbReference type="ChEBI" id="CHEBI:24646"/>
        <dbReference type="ChEBI" id="CHEBI:57597"/>
        <dbReference type="ChEBI" id="CHEBI:57642"/>
        <dbReference type="ChEBI" id="CHEBI:132124"/>
        <dbReference type="EC" id="1.1.5.3"/>
    </reaction>
</comment>
<comment type="cofactor">
    <cofactor evidence="1">
        <name>FMN</name>
        <dbReference type="ChEBI" id="CHEBI:58210"/>
    </cofactor>
</comment>
<comment type="pathway">
    <text evidence="1">Polyol metabolism; glycerol degradation via glycerol kinase pathway; glycerone phosphate from sn-glycerol 3-phosphate (anaerobic route): step 1/1.</text>
</comment>
<comment type="subunit">
    <text evidence="1">Composed of a catalytic GlpA/B dimer and of membrane bound GlpC.</text>
</comment>
<comment type="similarity">
    <text evidence="1">Belongs to the anaerobic G-3-P dehydrogenase subunit B family.</text>
</comment>
<organism>
    <name type="scientific">Escherichia coli O9:H4 (strain HS)</name>
    <dbReference type="NCBI Taxonomy" id="331112"/>
    <lineage>
        <taxon>Bacteria</taxon>
        <taxon>Pseudomonadati</taxon>
        <taxon>Pseudomonadota</taxon>
        <taxon>Gammaproteobacteria</taxon>
        <taxon>Enterobacterales</taxon>
        <taxon>Enterobacteriaceae</taxon>
        <taxon>Escherichia</taxon>
    </lineage>
</organism>
<proteinExistence type="inferred from homology"/>
<accession>A8A2A7</accession>
<evidence type="ECO:0000255" key="1">
    <source>
        <dbReference type="HAMAP-Rule" id="MF_00753"/>
    </source>
</evidence>
<protein>
    <recommendedName>
        <fullName evidence="1">Anaerobic glycerol-3-phosphate dehydrogenase subunit B</fullName>
        <shortName evidence="1">Anaerobic G-3-P dehydrogenase subunit B</shortName>
        <shortName evidence="1">Anaerobic G3Pdhase B</shortName>
        <ecNumber evidence="1">1.1.5.3</ecNumber>
    </recommendedName>
</protein>
<feature type="chain" id="PRO_1000062192" description="Anaerobic glycerol-3-phosphate dehydrogenase subunit B">
    <location>
        <begin position="1"/>
        <end position="419"/>
    </location>
</feature>
<dbReference type="EC" id="1.1.5.3" evidence="1"/>
<dbReference type="EMBL" id="CP000802">
    <property type="protein sequence ID" value="ABV06661.1"/>
    <property type="molecule type" value="Genomic_DNA"/>
</dbReference>
<dbReference type="RefSeq" id="WP_001209902.1">
    <property type="nucleotide sequence ID" value="NC_009800.1"/>
</dbReference>
<dbReference type="KEGG" id="ecx:EcHS_A2383"/>
<dbReference type="HOGENOM" id="CLU_047793_0_0_6"/>
<dbReference type="UniPathway" id="UPA00618">
    <property type="reaction ID" value="UER00673"/>
</dbReference>
<dbReference type="GO" id="GO:0009331">
    <property type="term" value="C:glycerol-3-phosphate dehydrogenase (FAD) complex"/>
    <property type="evidence" value="ECO:0007669"/>
    <property type="project" value="InterPro"/>
</dbReference>
<dbReference type="GO" id="GO:0004368">
    <property type="term" value="F:glycerol-3-phosphate dehydrogenase (quinone) activity"/>
    <property type="evidence" value="ECO:0007669"/>
    <property type="project" value="UniProtKB-UniRule"/>
</dbReference>
<dbReference type="GO" id="GO:0009061">
    <property type="term" value="P:anaerobic respiration"/>
    <property type="evidence" value="ECO:0007669"/>
    <property type="project" value="TreeGrafter"/>
</dbReference>
<dbReference type="GO" id="GO:0019563">
    <property type="term" value="P:glycerol catabolic process"/>
    <property type="evidence" value="ECO:0007669"/>
    <property type="project" value="UniProtKB-UniRule"/>
</dbReference>
<dbReference type="GO" id="GO:0046168">
    <property type="term" value="P:glycerol-3-phosphate catabolic process"/>
    <property type="evidence" value="ECO:0007669"/>
    <property type="project" value="TreeGrafter"/>
</dbReference>
<dbReference type="Gene3D" id="3.50.50.60">
    <property type="entry name" value="FAD/NAD(P)-binding domain"/>
    <property type="match status" value="1"/>
</dbReference>
<dbReference type="HAMAP" id="MF_00753">
    <property type="entry name" value="Glycerol3P_GlpB"/>
    <property type="match status" value="1"/>
</dbReference>
<dbReference type="InterPro" id="IPR003953">
    <property type="entry name" value="FAD-dep_OxRdtase_2_FAD-bd"/>
</dbReference>
<dbReference type="InterPro" id="IPR050315">
    <property type="entry name" value="FAD-oxidoreductase_2"/>
</dbReference>
<dbReference type="InterPro" id="IPR036188">
    <property type="entry name" value="FAD/NAD-bd_sf"/>
</dbReference>
<dbReference type="InterPro" id="IPR009158">
    <property type="entry name" value="G3P_DH_GlpB_su"/>
</dbReference>
<dbReference type="NCBIfam" id="TIGR03378">
    <property type="entry name" value="glycerol3P_GlpB"/>
    <property type="match status" value="1"/>
</dbReference>
<dbReference type="NCBIfam" id="NF003718">
    <property type="entry name" value="PRK05329.1-1"/>
    <property type="match status" value="1"/>
</dbReference>
<dbReference type="NCBIfam" id="NF003719">
    <property type="entry name" value="PRK05329.1-2"/>
    <property type="match status" value="1"/>
</dbReference>
<dbReference type="NCBIfam" id="NF003720">
    <property type="entry name" value="PRK05329.1-3"/>
    <property type="match status" value="1"/>
</dbReference>
<dbReference type="NCBIfam" id="NF003721">
    <property type="entry name" value="PRK05329.1-4"/>
    <property type="match status" value="1"/>
</dbReference>
<dbReference type="PANTHER" id="PTHR43400:SF11">
    <property type="entry name" value="ANAEROBIC GLYCEROL-3-PHOSPHATE DEHYDROGENASE SUBUNIT B"/>
    <property type="match status" value="1"/>
</dbReference>
<dbReference type="PANTHER" id="PTHR43400">
    <property type="entry name" value="FUMARATE REDUCTASE"/>
    <property type="match status" value="1"/>
</dbReference>
<dbReference type="Pfam" id="PF00890">
    <property type="entry name" value="FAD_binding_2"/>
    <property type="match status" value="1"/>
</dbReference>
<dbReference type="PIRSF" id="PIRSF000141">
    <property type="entry name" value="Anaerobic_G3P_dh"/>
    <property type="match status" value="1"/>
</dbReference>
<dbReference type="SUPFAM" id="SSF51905">
    <property type="entry name" value="FAD/NAD(P)-binding domain"/>
    <property type="match status" value="1"/>
</dbReference>
<keyword id="KW-0285">Flavoprotein</keyword>
<keyword id="KW-0288">FMN</keyword>
<keyword id="KW-0560">Oxidoreductase</keyword>